<reference key="1">
    <citation type="journal article" date="2004" name="J. Mol. Evol.">
        <title>Comparative analysis of the complete plastid genome sequence of the red alga Gracilaria tenuistipitata var. liui provides insights into the evolution of rhodoplasts and their relationship to other plastids.</title>
        <authorList>
            <person name="Hagopian J.C."/>
            <person name="Reis M."/>
            <person name="Kitajima J.P."/>
            <person name="Bhattacharya D."/>
            <person name="de Oliveira M.C."/>
        </authorList>
    </citation>
    <scope>NUCLEOTIDE SEQUENCE [LARGE SCALE GENOMIC DNA]</scope>
</reference>
<proteinExistence type="inferred from homology"/>
<keyword id="KW-0150">Chloroplast</keyword>
<keyword id="KW-0934">Plastid</keyword>
<keyword id="KW-0687">Ribonucleoprotein</keyword>
<keyword id="KW-0689">Ribosomal protein</keyword>
<dbReference type="EMBL" id="AY673996">
    <property type="protein sequence ID" value="AAT79622.1"/>
    <property type="molecule type" value="Genomic_DNA"/>
</dbReference>
<dbReference type="RefSeq" id="YP_063547.1">
    <property type="nucleotide sequence ID" value="NC_006137.1"/>
</dbReference>
<dbReference type="SMR" id="Q6B913"/>
<dbReference type="GeneID" id="2944131"/>
<dbReference type="GO" id="GO:0009507">
    <property type="term" value="C:chloroplast"/>
    <property type="evidence" value="ECO:0007669"/>
    <property type="project" value="UniProtKB-SubCell"/>
</dbReference>
<dbReference type="GO" id="GO:1990904">
    <property type="term" value="C:ribonucleoprotein complex"/>
    <property type="evidence" value="ECO:0007669"/>
    <property type="project" value="UniProtKB-KW"/>
</dbReference>
<dbReference type="GO" id="GO:0005840">
    <property type="term" value="C:ribosome"/>
    <property type="evidence" value="ECO:0007669"/>
    <property type="project" value="UniProtKB-KW"/>
</dbReference>
<dbReference type="GO" id="GO:0003735">
    <property type="term" value="F:structural constituent of ribosome"/>
    <property type="evidence" value="ECO:0007669"/>
    <property type="project" value="InterPro"/>
</dbReference>
<dbReference type="GO" id="GO:0006412">
    <property type="term" value="P:translation"/>
    <property type="evidence" value="ECO:0007669"/>
    <property type="project" value="UniProtKB-UniRule"/>
</dbReference>
<dbReference type="Gene3D" id="3.30.390.140">
    <property type="match status" value="1"/>
</dbReference>
<dbReference type="HAMAP" id="MF_00619">
    <property type="entry name" value="Ribosomal_plastid_cS23"/>
    <property type="match status" value="1"/>
</dbReference>
<dbReference type="InterPro" id="IPR038447">
    <property type="entry name" value="PSRP-3/Ycf65_sf"/>
</dbReference>
<dbReference type="InterPro" id="IPR006924">
    <property type="entry name" value="Ribosomal_PSRP3/Ycf65"/>
</dbReference>
<dbReference type="NCBIfam" id="NF002740">
    <property type="entry name" value="PRK02724.1"/>
    <property type="match status" value="1"/>
</dbReference>
<dbReference type="PANTHER" id="PTHR35108">
    <property type="entry name" value="30S RIBOSOMAL PROTEIN 3, CHLOROPLASTIC"/>
    <property type="match status" value="1"/>
</dbReference>
<dbReference type="PANTHER" id="PTHR35108:SF1">
    <property type="entry name" value="OS04G0461100 PROTEIN"/>
    <property type="match status" value="1"/>
</dbReference>
<dbReference type="Pfam" id="PF04839">
    <property type="entry name" value="PSRP-3_Ycf65"/>
    <property type="match status" value="1"/>
</dbReference>
<sequence>MSKFTFKILWLENNIAIAIDYNIGNNKSPLTSYFFWPRNDAWEELKIELESKPWINKNEKVDLLNKTTEIINFWQEKEKNTSLRKAKEKFPEFNFIGTN</sequence>
<feature type="chain" id="PRO_0000216761" description="Small ribosomal subunit protein cS23">
    <location>
        <begin position="1"/>
        <end position="99"/>
    </location>
</feature>
<protein>
    <recommendedName>
        <fullName evidence="1">Small ribosomal subunit protein cS23</fullName>
    </recommendedName>
    <alternativeName>
        <fullName>30S ribosomal protein 3, chloroplastic</fullName>
        <shortName evidence="1">PSRP-3</shortName>
    </alternativeName>
</protein>
<organism>
    <name type="scientific">Gracilaria tenuistipitata var. liui</name>
    <name type="common">Red alga</name>
    <dbReference type="NCBI Taxonomy" id="285951"/>
    <lineage>
        <taxon>Eukaryota</taxon>
        <taxon>Rhodophyta</taxon>
        <taxon>Florideophyceae</taxon>
        <taxon>Rhodymeniophycidae</taxon>
        <taxon>Gracilariales</taxon>
        <taxon>Gracilariaceae</taxon>
        <taxon>Gracilaria</taxon>
        <taxon>Gracilaria tenuistipitata</taxon>
    </lineage>
</organism>
<accession>Q6B913</accession>
<comment type="function">
    <text evidence="1">Probably a ribosomal protein or a ribosome-associated protein.</text>
</comment>
<comment type="subunit">
    <text evidence="1">Part of the 30S ribosomal subunit.</text>
</comment>
<comment type="subcellular location">
    <subcellularLocation>
        <location>Plastid</location>
        <location>Chloroplast</location>
    </subcellularLocation>
</comment>
<comment type="similarity">
    <text evidence="1">Belongs to the chloroplast-specific ribosomal protein cS23 family.</text>
</comment>
<name>RRP3_GRATL</name>
<geneLocation type="chloroplast"/>
<gene>
    <name evidence="1" type="primary">ycf65</name>
    <name type="ordered locus">Grc000041</name>
</gene>
<evidence type="ECO:0000255" key="1">
    <source>
        <dbReference type="HAMAP-Rule" id="MF_00619"/>
    </source>
</evidence>